<reference key="1">
    <citation type="journal article" date="2010" name="Appl. Environ. Microbiol.">
        <title>The genome sequence of Psychrobacter arcticus 273-4, a psychroactive Siberian permafrost bacterium, reveals mechanisms for adaptation to low-temperature growth.</title>
        <authorList>
            <person name="Ayala-del-Rio H.L."/>
            <person name="Chain P.S."/>
            <person name="Grzymski J.J."/>
            <person name="Ponder M.A."/>
            <person name="Ivanova N."/>
            <person name="Bergholz P.W."/>
            <person name="Di Bartolo G."/>
            <person name="Hauser L."/>
            <person name="Land M."/>
            <person name="Bakermans C."/>
            <person name="Rodrigues D."/>
            <person name="Klappenbach J."/>
            <person name="Zarka D."/>
            <person name="Larimer F."/>
            <person name="Richardson P."/>
            <person name="Murray A."/>
            <person name="Thomashow M."/>
            <person name="Tiedje J.M."/>
        </authorList>
    </citation>
    <scope>NUCLEOTIDE SEQUENCE [LARGE SCALE GENOMIC DNA]</scope>
    <source>
        <strain>DSM 17307 / VKM B-2377 / 273-4</strain>
    </source>
</reference>
<name>TATA_PSYA2</name>
<accession>Q4FQ61</accession>
<protein>
    <recommendedName>
        <fullName evidence="1">Sec-independent protein translocase protein TatA</fullName>
    </recommendedName>
</protein>
<dbReference type="EMBL" id="CP000082">
    <property type="protein sequence ID" value="AAZ19847.1"/>
    <property type="molecule type" value="Genomic_DNA"/>
</dbReference>
<dbReference type="RefSeq" id="WP_011281255.1">
    <property type="nucleotide sequence ID" value="NC_007204.1"/>
</dbReference>
<dbReference type="SMR" id="Q4FQ61"/>
<dbReference type="STRING" id="259536.Psyc_2000"/>
<dbReference type="KEGG" id="par:Psyc_2000"/>
<dbReference type="eggNOG" id="COG1826">
    <property type="taxonomic scope" value="Bacteria"/>
</dbReference>
<dbReference type="HOGENOM" id="CLU_086034_5_1_6"/>
<dbReference type="OrthoDB" id="7066617at2"/>
<dbReference type="Proteomes" id="UP000000546">
    <property type="component" value="Chromosome"/>
</dbReference>
<dbReference type="GO" id="GO:0033281">
    <property type="term" value="C:TAT protein transport complex"/>
    <property type="evidence" value="ECO:0007669"/>
    <property type="project" value="UniProtKB-UniRule"/>
</dbReference>
<dbReference type="GO" id="GO:0008320">
    <property type="term" value="F:protein transmembrane transporter activity"/>
    <property type="evidence" value="ECO:0007669"/>
    <property type="project" value="UniProtKB-UniRule"/>
</dbReference>
<dbReference type="GO" id="GO:0043953">
    <property type="term" value="P:protein transport by the Tat complex"/>
    <property type="evidence" value="ECO:0007669"/>
    <property type="project" value="UniProtKB-UniRule"/>
</dbReference>
<dbReference type="Gene3D" id="1.20.5.3310">
    <property type="match status" value="1"/>
</dbReference>
<dbReference type="HAMAP" id="MF_00236">
    <property type="entry name" value="TatA_E"/>
    <property type="match status" value="1"/>
</dbReference>
<dbReference type="InterPro" id="IPR003369">
    <property type="entry name" value="TatA/B/E"/>
</dbReference>
<dbReference type="InterPro" id="IPR006312">
    <property type="entry name" value="TatA/E"/>
</dbReference>
<dbReference type="NCBIfam" id="NF002813">
    <property type="entry name" value="PRK02958.1"/>
    <property type="match status" value="1"/>
</dbReference>
<dbReference type="NCBIfam" id="TIGR01411">
    <property type="entry name" value="tatAE"/>
    <property type="match status" value="1"/>
</dbReference>
<dbReference type="PANTHER" id="PTHR42982">
    <property type="entry name" value="SEC-INDEPENDENT PROTEIN TRANSLOCASE PROTEIN TATA"/>
    <property type="match status" value="1"/>
</dbReference>
<dbReference type="PANTHER" id="PTHR42982:SF1">
    <property type="entry name" value="SEC-INDEPENDENT PROTEIN TRANSLOCASE PROTEIN TATA"/>
    <property type="match status" value="1"/>
</dbReference>
<dbReference type="Pfam" id="PF02416">
    <property type="entry name" value="TatA_B_E"/>
    <property type="match status" value="1"/>
</dbReference>
<comment type="function">
    <text evidence="1">Part of the twin-arginine translocation (Tat) system that transports large folded proteins containing a characteristic twin-arginine motif in their signal peptide across membranes. TatA could form the protein-conducting channel of the Tat system.</text>
</comment>
<comment type="subunit">
    <text evidence="1">The Tat system comprises two distinct complexes: a TatABC complex, containing multiple copies of TatA, TatB and TatC subunits, and a separate TatA complex, containing only TatA subunits. Substrates initially bind to the TatABC complex, which probably triggers association of the separate TatA complex to form the active translocon.</text>
</comment>
<comment type="subcellular location">
    <subcellularLocation>
        <location evidence="1">Cell inner membrane</location>
        <topology evidence="1">Single-pass membrane protein</topology>
    </subcellularLocation>
</comment>
<comment type="similarity">
    <text evidence="1">Belongs to the TatA/E family.</text>
</comment>
<keyword id="KW-0997">Cell inner membrane</keyword>
<keyword id="KW-1003">Cell membrane</keyword>
<keyword id="KW-0472">Membrane</keyword>
<keyword id="KW-0653">Protein transport</keyword>
<keyword id="KW-1185">Reference proteome</keyword>
<keyword id="KW-0811">Translocation</keyword>
<keyword id="KW-0812">Transmembrane</keyword>
<keyword id="KW-1133">Transmembrane helix</keyword>
<keyword id="KW-0813">Transport</keyword>
<sequence length="87" mass="9280">MGSFSITHWLILLVVVVVVFGTSKLRNAGKDLGGAVKGFKEAVKDENTEHAKKHVVLDHDAGTNPPNITGTQSDTTSANKVDDTHNV</sequence>
<gene>
    <name evidence="1" type="primary">tatA</name>
    <name type="ordered locus">Psyc_2000</name>
</gene>
<evidence type="ECO:0000255" key="1">
    <source>
        <dbReference type="HAMAP-Rule" id="MF_00236"/>
    </source>
</evidence>
<evidence type="ECO:0000256" key="2">
    <source>
        <dbReference type="SAM" id="MobiDB-lite"/>
    </source>
</evidence>
<feature type="chain" id="PRO_1000197897" description="Sec-independent protein translocase protein TatA">
    <location>
        <begin position="1"/>
        <end position="87"/>
    </location>
</feature>
<feature type="transmembrane region" description="Helical" evidence="1">
    <location>
        <begin position="1"/>
        <end position="21"/>
    </location>
</feature>
<feature type="region of interest" description="Disordered" evidence="2">
    <location>
        <begin position="56"/>
        <end position="87"/>
    </location>
</feature>
<feature type="compositionally biased region" description="Polar residues" evidence="2">
    <location>
        <begin position="64"/>
        <end position="79"/>
    </location>
</feature>
<proteinExistence type="inferred from homology"/>
<organism>
    <name type="scientific">Psychrobacter arcticus (strain DSM 17307 / VKM B-2377 / 273-4)</name>
    <dbReference type="NCBI Taxonomy" id="259536"/>
    <lineage>
        <taxon>Bacteria</taxon>
        <taxon>Pseudomonadati</taxon>
        <taxon>Pseudomonadota</taxon>
        <taxon>Gammaproteobacteria</taxon>
        <taxon>Moraxellales</taxon>
        <taxon>Moraxellaceae</taxon>
        <taxon>Psychrobacter</taxon>
    </lineage>
</organism>